<feature type="chain" id="PRO_1000059975" description="Large ribosomal subunit protein uL29">
    <location>
        <begin position="1"/>
        <end position="63"/>
    </location>
</feature>
<organism>
    <name type="scientific">Yersinia pseudotuberculosis serotype O:1b (strain IP 31758)</name>
    <dbReference type="NCBI Taxonomy" id="349747"/>
    <lineage>
        <taxon>Bacteria</taxon>
        <taxon>Pseudomonadati</taxon>
        <taxon>Pseudomonadota</taxon>
        <taxon>Gammaproteobacteria</taxon>
        <taxon>Enterobacterales</taxon>
        <taxon>Yersiniaceae</taxon>
        <taxon>Yersinia</taxon>
    </lineage>
</organism>
<proteinExistence type="inferred from homology"/>
<sequence length="63" mass="7273">MKAQELREKSVEELNTELLNLLREQFNLRMQAASGQLQQTHLLKQVRRNVARVKTLLTEKAGA</sequence>
<comment type="similarity">
    <text evidence="1">Belongs to the universal ribosomal protein uL29 family.</text>
</comment>
<gene>
    <name evidence="1" type="primary">rpmC</name>
    <name type="ordered locus">YpsIP31758_3907</name>
</gene>
<name>RL29_YERP3</name>
<dbReference type="EMBL" id="CP000720">
    <property type="protein sequence ID" value="ABS47414.1"/>
    <property type="molecule type" value="Genomic_DNA"/>
</dbReference>
<dbReference type="RefSeq" id="WP_002218942.1">
    <property type="nucleotide sequence ID" value="NC_009708.1"/>
</dbReference>
<dbReference type="SMR" id="A7FNM7"/>
<dbReference type="GeneID" id="96663188"/>
<dbReference type="KEGG" id="ypi:YpsIP31758_3907"/>
<dbReference type="HOGENOM" id="CLU_158491_1_2_6"/>
<dbReference type="Proteomes" id="UP000002412">
    <property type="component" value="Chromosome"/>
</dbReference>
<dbReference type="GO" id="GO:0022625">
    <property type="term" value="C:cytosolic large ribosomal subunit"/>
    <property type="evidence" value="ECO:0007669"/>
    <property type="project" value="TreeGrafter"/>
</dbReference>
<dbReference type="GO" id="GO:0003735">
    <property type="term" value="F:structural constituent of ribosome"/>
    <property type="evidence" value="ECO:0007669"/>
    <property type="project" value="InterPro"/>
</dbReference>
<dbReference type="GO" id="GO:0006412">
    <property type="term" value="P:translation"/>
    <property type="evidence" value="ECO:0007669"/>
    <property type="project" value="UniProtKB-UniRule"/>
</dbReference>
<dbReference type="CDD" id="cd00427">
    <property type="entry name" value="Ribosomal_L29_HIP"/>
    <property type="match status" value="1"/>
</dbReference>
<dbReference type="FunFam" id="1.10.287.310:FF:000001">
    <property type="entry name" value="50S ribosomal protein L29"/>
    <property type="match status" value="1"/>
</dbReference>
<dbReference type="Gene3D" id="6.10.140.1970">
    <property type="match status" value="1"/>
</dbReference>
<dbReference type="HAMAP" id="MF_00374">
    <property type="entry name" value="Ribosomal_uL29"/>
    <property type="match status" value="1"/>
</dbReference>
<dbReference type="InterPro" id="IPR050063">
    <property type="entry name" value="Ribosomal_protein_uL29"/>
</dbReference>
<dbReference type="InterPro" id="IPR001854">
    <property type="entry name" value="Ribosomal_uL29"/>
</dbReference>
<dbReference type="InterPro" id="IPR018254">
    <property type="entry name" value="Ribosomal_uL29_CS"/>
</dbReference>
<dbReference type="InterPro" id="IPR036049">
    <property type="entry name" value="Ribosomal_uL29_sf"/>
</dbReference>
<dbReference type="NCBIfam" id="TIGR00012">
    <property type="entry name" value="L29"/>
    <property type="match status" value="1"/>
</dbReference>
<dbReference type="PANTHER" id="PTHR10916">
    <property type="entry name" value="60S RIBOSOMAL PROTEIN L35/50S RIBOSOMAL PROTEIN L29"/>
    <property type="match status" value="1"/>
</dbReference>
<dbReference type="PANTHER" id="PTHR10916:SF0">
    <property type="entry name" value="LARGE RIBOSOMAL SUBUNIT PROTEIN UL29C"/>
    <property type="match status" value="1"/>
</dbReference>
<dbReference type="Pfam" id="PF00831">
    <property type="entry name" value="Ribosomal_L29"/>
    <property type="match status" value="1"/>
</dbReference>
<dbReference type="SUPFAM" id="SSF46561">
    <property type="entry name" value="Ribosomal protein L29 (L29p)"/>
    <property type="match status" value="1"/>
</dbReference>
<dbReference type="PROSITE" id="PS00579">
    <property type="entry name" value="RIBOSOMAL_L29"/>
    <property type="match status" value="1"/>
</dbReference>
<reference key="1">
    <citation type="journal article" date="2007" name="PLoS Genet.">
        <title>The complete genome sequence of Yersinia pseudotuberculosis IP31758, the causative agent of Far East scarlet-like fever.</title>
        <authorList>
            <person name="Eppinger M."/>
            <person name="Rosovitz M.J."/>
            <person name="Fricke W.F."/>
            <person name="Rasko D.A."/>
            <person name="Kokorina G."/>
            <person name="Fayolle C."/>
            <person name="Lindler L.E."/>
            <person name="Carniel E."/>
            <person name="Ravel J."/>
        </authorList>
    </citation>
    <scope>NUCLEOTIDE SEQUENCE [LARGE SCALE GENOMIC DNA]</scope>
    <source>
        <strain>IP 31758</strain>
    </source>
</reference>
<evidence type="ECO:0000255" key="1">
    <source>
        <dbReference type="HAMAP-Rule" id="MF_00374"/>
    </source>
</evidence>
<evidence type="ECO:0000305" key="2"/>
<keyword id="KW-0687">Ribonucleoprotein</keyword>
<keyword id="KW-0689">Ribosomal protein</keyword>
<accession>A7FNM7</accession>
<protein>
    <recommendedName>
        <fullName evidence="1">Large ribosomal subunit protein uL29</fullName>
    </recommendedName>
    <alternativeName>
        <fullName evidence="2">50S ribosomal protein L29</fullName>
    </alternativeName>
</protein>